<feature type="signal peptide" evidence="1">
    <location>
        <begin position="1"/>
        <end position="20"/>
    </location>
</feature>
<feature type="chain" id="PRO_5000002184" description="Outer-membrane lipoprotein carrier protein">
    <location>
        <begin position="21"/>
        <end position="206"/>
    </location>
</feature>
<accession>Q3KA81</accession>
<keyword id="KW-0143">Chaperone</keyword>
<keyword id="KW-0574">Periplasm</keyword>
<keyword id="KW-0653">Protein transport</keyword>
<keyword id="KW-0732">Signal</keyword>
<keyword id="KW-0813">Transport</keyword>
<protein>
    <recommendedName>
        <fullName evidence="1">Outer-membrane lipoprotein carrier protein</fullName>
    </recommendedName>
</protein>
<reference key="1">
    <citation type="journal article" date="2009" name="Genome Biol.">
        <title>Genomic and genetic analyses of diversity and plant interactions of Pseudomonas fluorescens.</title>
        <authorList>
            <person name="Silby M.W."/>
            <person name="Cerdeno-Tarraga A.M."/>
            <person name="Vernikos G.S."/>
            <person name="Giddens S.R."/>
            <person name="Jackson R.W."/>
            <person name="Preston G.M."/>
            <person name="Zhang X.-X."/>
            <person name="Moon C.D."/>
            <person name="Gehrig S.M."/>
            <person name="Godfrey S.A.C."/>
            <person name="Knight C.G."/>
            <person name="Malone J.G."/>
            <person name="Robinson Z."/>
            <person name="Spiers A.J."/>
            <person name="Harris S."/>
            <person name="Challis G.L."/>
            <person name="Yaxley A.M."/>
            <person name="Harris D."/>
            <person name="Seeger K."/>
            <person name="Murphy L."/>
            <person name="Rutter S."/>
            <person name="Squares R."/>
            <person name="Quail M.A."/>
            <person name="Saunders E."/>
            <person name="Mavromatis K."/>
            <person name="Brettin T.S."/>
            <person name="Bentley S.D."/>
            <person name="Hothersall J."/>
            <person name="Stephens E."/>
            <person name="Thomas C.M."/>
            <person name="Parkhill J."/>
            <person name="Levy S.B."/>
            <person name="Rainey P.B."/>
            <person name="Thomson N.R."/>
        </authorList>
    </citation>
    <scope>NUCLEOTIDE SEQUENCE [LARGE SCALE GENOMIC DNA]</scope>
    <source>
        <strain>Pf0-1</strain>
    </source>
</reference>
<sequence>MRLIRMLLPVLALTTLTAHADDKDVARLTQLLETSKTLTANFSQLTLDGSGTQLQETTGDMTLQRPGLFYWHTNAPAEQTMVSDGKKVTLWDPDLEQATIKKLDERLTQTPALLLSGDVSKISQSFDITAKEAGGVIDFTLKPKTKDTLFDSLRLSFRNGLVNDMQLIDSVGQRTNILFTGVKANEAVPASKFKFDIPKGADVIQE</sequence>
<dbReference type="EMBL" id="CP000094">
    <property type="protein sequence ID" value="ABA75323.1"/>
    <property type="molecule type" value="Genomic_DNA"/>
</dbReference>
<dbReference type="RefSeq" id="WP_011334944.1">
    <property type="nucleotide sequence ID" value="NC_007492.2"/>
</dbReference>
<dbReference type="SMR" id="Q3KA81"/>
<dbReference type="KEGG" id="pfo:Pfl01_3585"/>
<dbReference type="eggNOG" id="COG2834">
    <property type="taxonomic scope" value="Bacteria"/>
</dbReference>
<dbReference type="HOGENOM" id="CLU_087560_0_0_6"/>
<dbReference type="Proteomes" id="UP000002704">
    <property type="component" value="Chromosome"/>
</dbReference>
<dbReference type="GO" id="GO:0030288">
    <property type="term" value="C:outer membrane-bounded periplasmic space"/>
    <property type="evidence" value="ECO:0007669"/>
    <property type="project" value="TreeGrafter"/>
</dbReference>
<dbReference type="GO" id="GO:0044874">
    <property type="term" value="P:lipoprotein localization to outer membrane"/>
    <property type="evidence" value="ECO:0007669"/>
    <property type="project" value="UniProtKB-UniRule"/>
</dbReference>
<dbReference type="GO" id="GO:0042953">
    <property type="term" value="P:lipoprotein transport"/>
    <property type="evidence" value="ECO:0007669"/>
    <property type="project" value="InterPro"/>
</dbReference>
<dbReference type="CDD" id="cd16325">
    <property type="entry name" value="LolA"/>
    <property type="match status" value="1"/>
</dbReference>
<dbReference type="Gene3D" id="2.50.20.10">
    <property type="entry name" value="Lipoprotein localisation LolA/LolB/LppX"/>
    <property type="match status" value="1"/>
</dbReference>
<dbReference type="HAMAP" id="MF_00240">
    <property type="entry name" value="LolA"/>
    <property type="match status" value="1"/>
</dbReference>
<dbReference type="InterPro" id="IPR029046">
    <property type="entry name" value="LolA/LolB/LppX"/>
</dbReference>
<dbReference type="InterPro" id="IPR004564">
    <property type="entry name" value="OM_lipoprot_carrier_LolA-like"/>
</dbReference>
<dbReference type="InterPro" id="IPR018323">
    <property type="entry name" value="OM_lipoprot_carrier_LolA_Pbac"/>
</dbReference>
<dbReference type="NCBIfam" id="TIGR00547">
    <property type="entry name" value="lolA"/>
    <property type="match status" value="1"/>
</dbReference>
<dbReference type="PANTHER" id="PTHR35869">
    <property type="entry name" value="OUTER-MEMBRANE LIPOPROTEIN CARRIER PROTEIN"/>
    <property type="match status" value="1"/>
</dbReference>
<dbReference type="PANTHER" id="PTHR35869:SF1">
    <property type="entry name" value="OUTER-MEMBRANE LIPOPROTEIN CARRIER PROTEIN"/>
    <property type="match status" value="1"/>
</dbReference>
<dbReference type="Pfam" id="PF03548">
    <property type="entry name" value="LolA"/>
    <property type="match status" value="1"/>
</dbReference>
<dbReference type="SUPFAM" id="SSF89392">
    <property type="entry name" value="Prokaryotic lipoproteins and lipoprotein localization factors"/>
    <property type="match status" value="1"/>
</dbReference>
<gene>
    <name evidence="1" type="primary">lolA</name>
    <name type="ordered locus">Pfl01_3585</name>
</gene>
<name>LOLA_PSEPF</name>
<organism>
    <name type="scientific">Pseudomonas fluorescens (strain Pf0-1)</name>
    <dbReference type="NCBI Taxonomy" id="205922"/>
    <lineage>
        <taxon>Bacteria</taxon>
        <taxon>Pseudomonadati</taxon>
        <taxon>Pseudomonadota</taxon>
        <taxon>Gammaproteobacteria</taxon>
        <taxon>Pseudomonadales</taxon>
        <taxon>Pseudomonadaceae</taxon>
        <taxon>Pseudomonas</taxon>
    </lineage>
</organism>
<comment type="function">
    <text evidence="1">Participates in the translocation of lipoproteins from the inner membrane to the outer membrane. Only forms a complex with a lipoprotein if the residue after the N-terminal Cys is not an aspartate (The Asp acts as a targeting signal to indicate that the lipoprotein should stay in the inner membrane).</text>
</comment>
<comment type="subunit">
    <text evidence="1">Monomer.</text>
</comment>
<comment type="subcellular location">
    <subcellularLocation>
        <location evidence="1">Periplasm</location>
    </subcellularLocation>
</comment>
<comment type="similarity">
    <text evidence="1">Belongs to the LolA family.</text>
</comment>
<proteinExistence type="inferred from homology"/>
<evidence type="ECO:0000255" key="1">
    <source>
        <dbReference type="HAMAP-Rule" id="MF_00240"/>
    </source>
</evidence>